<reference key="1">
    <citation type="submission" date="2006-08" db="EMBL/GenBank/DDBJ databases">
        <authorList>
            <consortium name="NIH - Mammalian Gene Collection (MGC) project"/>
        </authorList>
    </citation>
    <scope>NUCLEOTIDE SEQUENCE [LARGE SCALE MRNA]</scope>
    <source>
        <strain>Hereford</strain>
        <tissue>Thymus</tissue>
    </source>
</reference>
<reference key="2">
    <citation type="journal article" date="2010" name="Cell">
        <title>The conserved Bardet-Biedl syndrome proteins assemble a coat that traffics membrane proteins to cilia.</title>
        <authorList>
            <person name="Jin H."/>
            <person name="White S.R."/>
            <person name="Shida T."/>
            <person name="Schulz S."/>
            <person name="Aguiar M."/>
            <person name="Gygi S.P."/>
            <person name="Bazan J.F."/>
            <person name="Nachury M.V."/>
        </authorList>
    </citation>
    <scope>INTERACTION WITH THE BBSOME</scope>
</reference>
<sequence>MGLLDRLSGLLGLKKKEVHVLCLGLDNSGKTTIINKLKPSNAQSQDIVPTIGFSIQKFKSSSLSFTVFDMSGQGRYRNLWEHYYKEGQAIIFVIDSSDKLRMVVAKEELRTLLNHPDIKHRRIPILFFANKMDLRDALTSVKVSQLLCLEDIKDKPWHICASDAIKGEGLQEGVDWLQDQIQSVKT</sequence>
<gene>
    <name type="primary">ARL6</name>
</gene>
<accession>Q0IIM2</accession>
<protein>
    <recommendedName>
        <fullName>ADP-ribosylation factor-like protein 6</fullName>
    </recommendedName>
</protein>
<organism>
    <name type="scientific">Bos taurus</name>
    <name type="common">Bovine</name>
    <dbReference type="NCBI Taxonomy" id="9913"/>
    <lineage>
        <taxon>Eukaryota</taxon>
        <taxon>Metazoa</taxon>
        <taxon>Chordata</taxon>
        <taxon>Craniata</taxon>
        <taxon>Vertebrata</taxon>
        <taxon>Euteleostomi</taxon>
        <taxon>Mammalia</taxon>
        <taxon>Eutheria</taxon>
        <taxon>Laurasiatheria</taxon>
        <taxon>Artiodactyla</taxon>
        <taxon>Ruminantia</taxon>
        <taxon>Pecora</taxon>
        <taxon>Bovidae</taxon>
        <taxon>Bovinae</taxon>
        <taxon>Bos</taxon>
    </lineage>
</organism>
<comment type="function">
    <text evidence="1">Involved in membrane protein trafficking at the base of the ciliary organelle. Mediates recruitment onto plasma membrane of the BBSome complex which would constitute a coat complex required for sorting of specific membrane proteins to the primary cilia. Together with the BBSome complex and LTZL1, controls SMO ciliary trafficking and contributes to the sonic hedgehog (SHH) pathway regulation. May regulate cilia assembly and disassembly and subsequent ciliary signaling events such as the Wnt signaling cascade. Isoform 2 may be required for proper retinal function and organization (By similarity).</text>
</comment>
<comment type="subunit">
    <text evidence="3">Interacts with SEC61B, ARL6IP1, ARL6IP2, ARL6IP3, ARL6IP4 ARL6IP5 and ARL6IP6. Interacts (GTP-bound form) with the BBSome a complex that contains BBS1, BBS2, BBS4, BBS5, BBS7, BBS8/TTC8, BBS9 and BBIP10. Interacts (GTP-free form) with IFT27.</text>
</comment>
<comment type="subcellular location">
    <subcellularLocation>
        <location evidence="1">Cell projection</location>
        <location evidence="1">Cilium membrane</location>
        <topology evidence="1">Peripheral membrane protein</topology>
        <orientation evidence="1">Cytoplasmic side</orientation>
    </subcellularLocation>
    <subcellularLocation>
        <location evidence="1">Cytoplasm</location>
        <location evidence="1">Cytoskeleton</location>
        <location evidence="1">Cilium axoneme</location>
    </subcellularLocation>
    <subcellularLocation>
        <location evidence="1">Cytoplasm</location>
        <location evidence="1">Cytoskeleton</location>
        <location evidence="1">Cilium basal body</location>
    </subcellularLocation>
    <text evidence="1">Appears in a pattern of punctae flanking the microtubule axoneme that likely correspond to small membrane-associated patches. Localizes to the so-called ciliary gate where vesicles carrying ciliary cargo fuse with the membrane (By similarity).</text>
</comment>
<comment type="similarity">
    <text evidence="4">Belongs to the small GTPase superfamily. Arf family.</text>
</comment>
<evidence type="ECO:0000250" key="1"/>
<evidence type="ECO:0000255" key="2"/>
<evidence type="ECO:0000269" key="3">
    <source>
    </source>
</evidence>
<evidence type="ECO:0000305" key="4"/>
<evidence type="ECO:0007829" key="5">
    <source>
        <dbReference type="PDB" id="6VBV"/>
    </source>
</evidence>
<proteinExistence type="evidence at protein level"/>
<keyword id="KW-0002">3D-structure</keyword>
<keyword id="KW-1003">Cell membrane</keyword>
<keyword id="KW-0966">Cell projection</keyword>
<keyword id="KW-0970">Cilium biogenesis/degradation</keyword>
<keyword id="KW-0963">Cytoplasm</keyword>
<keyword id="KW-0206">Cytoskeleton</keyword>
<keyword id="KW-0342">GTP-binding</keyword>
<keyword id="KW-0449">Lipoprotein</keyword>
<keyword id="KW-0472">Membrane</keyword>
<keyword id="KW-0519">Myristate</keyword>
<keyword id="KW-0547">Nucleotide-binding</keyword>
<keyword id="KW-0653">Protein transport</keyword>
<keyword id="KW-1185">Reference proteome</keyword>
<keyword id="KW-0813">Transport</keyword>
<dbReference type="EMBL" id="BC122575">
    <property type="protein sequence ID" value="AAI22576.1"/>
    <property type="molecule type" value="mRNA"/>
</dbReference>
<dbReference type="RefSeq" id="NP_001069250.1">
    <property type="nucleotide sequence ID" value="NM_001075782.1"/>
</dbReference>
<dbReference type="PDB" id="6VBV">
    <property type="method" value="EM"/>
    <property type="resolution" value="3.50 A"/>
    <property type="chains" value="3=1-186"/>
</dbReference>
<dbReference type="PDB" id="6VOA">
    <property type="method" value="EM"/>
    <property type="resolution" value="4.00 A"/>
    <property type="chains" value="A=1-186"/>
</dbReference>
<dbReference type="PDBsum" id="6VBV"/>
<dbReference type="PDBsum" id="6VOA"/>
<dbReference type="EMDB" id="EMD-21145"/>
<dbReference type="EMDB" id="EMD-21259"/>
<dbReference type="SMR" id="Q0IIM2"/>
<dbReference type="FunCoup" id="Q0IIM2">
    <property type="interactions" value="1161"/>
</dbReference>
<dbReference type="STRING" id="9913.ENSBTAP00000013306"/>
<dbReference type="PaxDb" id="9913-ENSBTAP00000013306"/>
<dbReference type="Ensembl" id="ENSBTAT00000013306.4">
    <property type="protein sequence ID" value="ENSBTAP00000013306.3"/>
    <property type="gene ID" value="ENSBTAG00000010091.6"/>
</dbReference>
<dbReference type="GeneID" id="519014"/>
<dbReference type="KEGG" id="bta:519014"/>
<dbReference type="CTD" id="84100"/>
<dbReference type="VEuPathDB" id="HostDB:ENSBTAG00000010091"/>
<dbReference type="VGNC" id="VGNC:26149">
    <property type="gene designation" value="ARL6"/>
</dbReference>
<dbReference type="eggNOG" id="KOG0070">
    <property type="taxonomic scope" value="Eukaryota"/>
</dbReference>
<dbReference type="GeneTree" id="ENSGT00940000156459"/>
<dbReference type="HOGENOM" id="CLU_040729_9_1_1"/>
<dbReference type="InParanoid" id="Q0IIM2"/>
<dbReference type="OMA" id="NKPWHIC"/>
<dbReference type="OrthoDB" id="442317at2759"/>
<dbReference type="TreeFam" id="TF105466"/>
<dbReference type="Reactome" id="R-BTA-5620922">
    <property type="pathway name" value="BBSome-mediated cargo-targeting to cilium"/>
</dbReference>
<dbReference type="Proteomes" id="UP000009136">
    <property type="component" value="Chromosome 1"/>
</dbReference>
<dbReference type="Bgee" id="ENSBTAG00000010091">
    <property type="expression patterns" value="Expressed in oocyte and 102 other cell types or tissues"/>
</dbReference>
<dbReference type="GO" id="GO:0005879">
    <property type="term" value="C:axonemal microtubule"/>
    <property type="evidence" value="ECO:0000314"/>
    <property type="project" value="UniProtKB"/>
</dbReference>
<dbReference type="GO" id="GO:0005930">
    <property type="term" value="C:axoneme"/>
    <property type="evidence" value="ECO:0000314"/>
    <property type="project" value="UniProtKB"/>
</dbReference>
<dbReference type="GO" id="GO:0060170">
    <property type="term" value="C:ciliary membrane"/>
    <property type="evidence" value="ECO:0007669"/>
    <property type="project" value="UniProtKB-SubCell"/>
</dbReference>
<dbReference type="GO" id="GO:0005737">
    <property type="term" value="C:cytoplasm"/>
    <property type="evidence" value="ECO:0000318"/>
    <property type="project" value="GO_Central"/>
</dbReference>
<dbReference type="GO" id="GO:0005829">
    <property type="term" value="C:cytosol"/>
    <property type="evidence" value="ECO:0007669"/>
    <property type="project" value="Ensembl"/>
</dbReference>
<dbReference type="GO" id="GO:0030117">
    <property type="term" value="C:membrane coat"/>
    <property type="evidence" value="ECO:0000314"/>
    <property type="project" value="UniProtKB"/>
</dbReference>
<dbReference type="GO" id="GO:0005654">
    <property type="term" value="C:nucleoplasm"/>
    <property type="evidence" value="ECO:0007669"/>
    <property type="project" value="Ensembl"/>
</dbReference>
<dbReference type="GO" id="GO:0062063">
    <property type="term" value="F:BBSome binding"/>
    <property type="evidence" value="ECO:0000314"/>
    <property type="project" value="UniProtKB"/>
</dbReference>
<dbReference type="GO" id="GO:0005525">
    <property type="term" value="F:GTP binding"/>
    <property type="evidence" value="ECO:0000318"/>
    <property type="project" value="GO_Central"/>
</dbReference>
<dbReference type="GO" id="GO:0003924">
    <property type="term" value="F:GTPase activity"/>
    <property type="evidence" value="ECO:0007669"/>
    <property type="project" value="InterPro"/>
</dbReference>
<dbReference type="GO" id="GO:0005543">
    <property type="term" value="F:phospholipid binding"/>
    <property type="evidence" value="ECO:0000314"/>
    <property type="project" value="UniProtKB"/>
</dbReference>
<dbReference type="GO" id="GO:0007420">
    <property type="term" value="P:brain development"/>
    <property type="evidence" value="ECO:0007669"/>
    <property type="project" value="Ensembl"/>
</dbReference>
<dbReference type="GO" id="GO:0060271">
    <property type="term" value="P:cilium assembly"/>
    <property type="evidence" value="ECO:0000250"/>
    <property type="project" value="UniProtKB"/>
</dbReference>
<dbReference type="GO" id="GO:0045444">
    <property type="term" value="P:fat cell differentiation"/>
    <property type="evidence" value="ECO:0007669"/>
    <property type="project" value="Ensembl"/>
</dbReference>
<dbReference type="GO" id="GO:0006886">
    <property type="term" value="P:intracellular protein transport"/>
    <property type="evidence" value="ECO:0000318"/>
    <property type="project" value="GO_Central"/>
</dbReference>
<dbReference type="GO" id="GO:0061512">
    <property type="term" value="P:protein localization to cilium"/>
    <property type="evidence" value="ECO:0000318"/>
    <property type="project" value="GO_Central"/>
</dbReference>
<dbReference type="GO" id="GO:0097499">
    <property type="term" value="P:protein localization to non-motile cilium"/>
    <property type="evidence" value="ECO:0007669"/>
    <property type="project" value="Ensembl"/>
</dbReference>
<dbReference type="GO" id="GO:0051258">
    <property type="term" value="P:protein polymerization"/>
    <property type="evidence" value="ECO:0000314"/>
    <property type="project" value="UniProtKB"/>
</dbReference>
<dbReference type="GO" id="GO:0006612">
    <property type="term" value="P:protein targeting to membrane"/>
    <property type="evidence" value="ECO:0000314"/>
    <property type="project" value="UniProtKB"/>
</dbReference>
<dbReference type="GO" id="GO:1903445">
    <property type="term" value="P:protein transport from ciliary membrane to plasma membrane"/>
    <property type="evidence" value="ECO:0007669"/>
    <property type="project" value="Ensembl"/>
</dbReference>
<dbReference type="GO" id="GO:0008589">
    <property type="term" value="P:regulation of smoothened signaling pathway"/>
    <property type="evidence" value="ECO:0007669"/>
    <property type="project" value="Ensembl"/>
</dbReference>
<dbReference type="GO" id="GO:0010842">
    <property type="term" value="P:retina layer formation"/>
    <property type="evidence" value="ECO:0007669"/>
    <property type="project" value="Ensembl"/>
</dbReference>
<dbReference type="GO" id="GO:0016192">
    <property type="term" value="P:vesicle-mediated transport"/>
    <property type="evidence" value="ECO:0000318"/>
    <property type="project" value="GO_Central"/>
</dbReference>
<dbReference type="GO" id="GO:0016055">
    <property type="term" value="P:Wnt signaling pathway"/>
    <property type="evidence" value="ECO:0007669"/>
    <property type="project" value="Ensembl"/>
</dbReference>
<dbReference type="CDD" id="cd04157">
    <property type="entry name" value="Arl6"/>
    <property type="match status" value="1"/>
</dbReference>
<dbReference type="FunFam" id="3.40.50.300:FF:000457">
    <property type="entry name" value="ADP-ribosylation factor-like protein 6"/>
    <property type="match status" value="1"/>
</dbReference>
<dbReference type="Gene3D" id="3.40.50.300">
    <property type="entry name" value="P-loop containing nucleotide triphosphate hydrolases"/>
    <property type="match status" value="1"/>
</dbReference>
<dbReference type="InterPro" id="IPR041839">
    <property type="entry name" value="Arl6"/>
</dbReference>
<dbReference type="InterPro" id="IPR027417">
    <property type="entry name" value="P-loop_NTPase"/>
</dbReference>
<dbReference type="InterPro" id="IPR005225">
    <property type="entry name" value="Small_GTP-bd"/>
</dbReference>
<dbReference type="InterPro" id="IPR024156">
    <property type="entry name" value="Small_GTPase_ARF"/>
</dbReference>
<dbReference type="InterPro" id="IPR006689">
    <property type="entry name" value="Small_GTPase_ARF/SAR"/>
</dbReference>
<dbReference type="NCBIfam" id="TIGR00231">
    <property type="entry name" value="small_GTP"/>
    <property type="match status" value="1"/>
</dbReference>
<dbReference type="PANTHER" id="PTHR11711">
    <property type="entry name" value="ADP RIBOSYLATION FACTOR-RELATED"/>
    <property type="match status" value="1"/>
</dbReference>
<dbReference type="Pfam" id="PF00025">
    <property type="entry name" value="Arf"/>
    <property type="match status" value="1"/>
</dbReference>
<dbReference type="PRINTS" id="PR00328">
    <property type="entry name" value="SAR1GTPBP"/>
</dbReference>
<dbReference type="SMART" id="SM00177">
    <property type="entry name" value="ARF"/>
    <property type="match status" value="1"/>
</dbReference>
<dbReference type="SMART" id="SM00178">
    <property type="entry name" value="SAR"/>
    <property type="match status" value="1"/>
</dbReference>
<dbReference type="SUPFAM" id="SSF52540">
    <property type="entry name" value="P-loop containing nucleoside triphosphate hydrolases"/>
    <property type="match status" value="1"/>
</dbReference>
<dbReference type="PROSITE" id="PS51417">
    <property type="entry name" value="ARF"/>
    <property type="match status" value="1"/>
</dbReference>
<feature type="initiator methionine" description="Removed" evidence="2">
    <location>
        <position position="1"/>
    </location>
</feature>
<feature type="chain" id="PRO_0000282338" description="ADP-ribosylation factor-like protein 6">
    <location>
        <begin position="2"/>
        <end position="186"/>
    </location>
</feature>
<feature type="binding site" evidence="1">
    <location>
        <begin position="24"/>
        <end position="31"/>
    </location>
    <ligand>
        <name>GTP</name>
        <dbReference type="ChEBI" id="CHEBI:37565"/>
    </ligand>
</feature>
<feature type="binding site" evidence="1">
    <location>
        <begin position="69"/>
        <end position="73"/>
    </location>
    <ligand>
        <name>GTP</name>
        <dbReference type="ChEBI" id="CHEBI:37565"/>
    </ligand>
</feature>
<feature type="binding site" evidence="1">
    <location>
        <begin position="130"/>
        <end position="133"/>
    </location>
    <ligand>
        <name>GTP</name>
        <dbReference type="ChEBI" id="CHEBI:37565"/>
    </ligand>
</feature>
<feature type="lipid moiety-binding region" description="N-myristoyl glycine" evidence="2">
    <location>
        <position position="2"/>
    </location>
</feature>
<feature type="strand" evidence="5">
    <location>
        <begin position="21"/>
        <end position="23"/>
    </location>
</feature>
<feature type="helix" evidence="5">
    <location>
        <begin position="30"/>
        <end position="35"/>
    </location>
</feature>
<feature type="turn" evidence="5">
    <location>
        <begin position="40"/>
        <end position="42"/>
    </location>
</feature>
<feature type="strand" evidence="5">
    <location>
        <begin position="56"/>
        <end position="59"/>
    </location>
</feature>
<feature type="strand" evidence="5">
    <location>
        <begin position="64"/>
        <end position="67"/>
    </location>
</feature>
<feature type="helix" evidence="5">
    <location>
        <begin position="74"/>
        <end position="76"/>
    </location>
</feature>
<feature type="helix" evidence="5">
    <location>
        <begin position="78"/>
        <end position="84"/>
    </location>
</feature>
<feature type="strand" evidence="5">
    <location>
        <begin position="90"/>
        <end position="95"/>
    </location>
</feature>
<feature type="helix" evidence="5">
    <location>
        <begin position="102"/>
        <end position="113"/>
    </location>
</feature>
<feature type="turn" evidence="5">
    <location>
        <begin position="116"/>
        <end position="120"/>
    </location>
</feature>
<feature type="strand" evidence="5">
    <location>
        <begin position="125"/>
        <end position="130"/>
    </location>
</feature>
<feature type="helix" evidence="5">
    <location>
        <begin position="140"/>
        <end position="147"/>
    </location>
</feature>
<feature type="turn" evidence="5">
    <location>
        <begin position="148"/>
        <end position="150"/>
    </location>
</feature>
<feature type="strand" evidence="5">
    <location>
        <begin position="157"/>
        <end position="162"/>
    </location>
</feature>
<feature type="strand" evidence="5">
    <location>
        <begin position="164"/>
        <end position="166"/>
    </location>
</feature>
<feature type="helix" evidence="5">
    <location>
        <begin position="170"/>
        <end position="182"/>
    </location>
</feature>
<name>ARL6_BOVIN</name>